<sequence length="452" mass="49731">MTYVFPETIAAQATPSGRGGIGVVRVSGEKTKAIAQKILGCVPKPRYATFVKFRDSGSVIDEGIALYFPKPNSFTGEDVLELHGHGGPVVMDRLLNTVLKAGARQARPGEFSERAFLNNKIDLAQAEAVADLINASSEQAARSAMRSLQGEFSKRIHQLVDALIQLRMYIEASIDFPEEEIDFLADERIKETLENLTHQVQEIEKTAKQGALLREGITVVIAGEPNVGKSSLLNLLSGQETAIVTDIAGTTRDIIRESIHIDGLPIHVVDTAGLRLTEDVVEKEGVRRTQKAVQQADLLLLMIDASKPTEDFKKIIAQWFSENDNKIPTLIVENKIDLIGEAPRKENKEYPHIKLSVKTRAGVELLKNHLKNTAGFEATHENNFIARRRHCDAIARASAFLKNANNHLLNQKAGELVAEDLKLAQNALSEITGEFTSDDLLGKIFSEFCIGK</sequence>
<evidence type="ECO:0000255" key="1">
    <source>
        <dbReference type="HAMAP-Rule" id="MF_00379"/>
    </source>
</evidence>
<evidence type="ECO:0000305" key="2"/>
<protein>
    <recommendedName>
        <fullName evidence="1">tRNA modification GTPase MnmE</fullName>
        <ecNumber evidence="1">3.6.-.-</ecNumber>
    </recommendedName>
</protein>
<dbReference type="EC" id="3.6.-.-" evidence="1"/>
<dbReference type="EMBL" id="Y10436">
    <property type="protein sequence ID" value="CAA71458.1"/>
    <property type="molecule type" value="Genomic_DNA"/>
</dbReference>
<dbReference type="EMBL" id="AE016828">
    <property type="protein sequence ID" value="AAO91413.1"/>
    <property type="status" value="ALT_INIT"/>
    <property type="molecule type" value="Genomic_DNA"/>
</dbReference>
<dbReference type="RefSeq" id="NP_820899.1">
    <property type="nucleotide sequence ID" value="NC_002971.3"/>
</dbReference>
<dbReference type="SMR" id="P94612"/>
<dbReference type="STRING" id="227377.CBU_1922"/>
<dbReference type="EnsemblBacteria" id="AAO91413">
    <property type="protein sequence ID" value="AAO91413"/>
    <property type="gene ID" value="CBU_1922"/>
</dbReference>
<dbReference type="GeneID" id="1209835"/>
<dbReference type="KEGG" id="cbu:CBU_1922"/>
<dbReference type="PATRIC" id="fig|227377.7.peg.1905"/>
<dbReference type="eggNOG" id="COG0486">
    <property type="taxonomic scope" value="Bacteria"/>
</dbReference>
<dbReference type="HOGENOM" id="CLU_019624_4_1_6"/>
<dbReference type="OrthoDB" id="9805918at2"/>
<dbReference type="Proteomes" id="UP000002671">
    <property type="component" value="Chromosome"/>
</dbReference>
<dbReference type="GO" id="GO:0005737">
    <property type="term" value="C:cytoplasm"/>
    <property type="evidence" value="ECO:0000318"/>
    <property type="project" value="GO_Central"/>
</dbReference>
<dbReference type="GO" id="GO:0005829">
    <property type="term" value="C:cytosol"/>
    <property type="evidence" value="ECO:0000318"/>
    <property type="project" value="GO_Central"/>
</dbReference>
<dbReference type="GO" id="GO:0005525">
    <property type="term" value="F:GTP binding"/>
    <property type="evidence" value="ECO:0007669"/>
    <property type="project" value="UniProtKB-UniRule"/>
</dbReference>
<dbReference type="GO" id="GO:0003924">
    <property type="term" value="F:GTPase activity"/>
    <property type="evidence" value="ECO:0007669"/>
    <property type="project" value="UniProtKB-UniRule"/>
</dbReference>
<dbReference type="GO" id="GO:0046872">
    <property type="term" value="F:metal ion binding"/>
    <property type="evidence" value="ECO:0007669"/>
    <property type="project" value="UniProtKB-KW"/>
</dbReference>
<dbReference type="GO" id="GO:0030488">
    <property type="term" value="P:tRNA methylation"/>
    <property type="evidence" value="ECO:0000318"/>
    <property type="project" value="GO_Central"/>
</dbReference>
<dbReference type="GO" id="GO:0002098">
    <property type="term" value="P:tRNA wobble uridine modification"/>
    <property type="evidence" value="ECO:0000318"/>
    <property type="project" value="GO_Central"/>
</dbReference>
<dbReference type="CDD" id="cd04164">
    <property type="entry name" value="trmE"/>
    <property type="match status" value="1"/>
</dbReference>
<dbReference type="CDD" id="cd14858">
    <property type="entry name" value="TrmE_N"/>
    <property type="match status" value="1"/>
</dbReference>
<dbReference type="FunFam" id="3.30.1360.120:FF:000001">
    <property type="entry name" value="tRNA modification GTPase MnmE"/>
    <property type="match status" value="1"/>
</dbReference>
<dbReference type="FunFam" id="3.40.50.300:FF:000249">
    <property type="entry name" value="tRNA modification GTPase MnmE"/>
    <property type="match status" value="1"/>
</dbReference>
<dbReference type="Gene3D" id="3.40.50.300">
    <property type="entry name" value="P-loop containing nucleotide triphosphate hydrolases"/>
    <property type="match status" value="1"/>
</dbReference>
<dbReference type="Gene3D" id="3.30.1360.120">
    <property type="entry name" value="Probable tRNA modification gtpase trme, domain 1"/>
    <property type="match status" value="1"/>
</dbReference>
<dbReference type="Gene3D" id="1.20.120.430">
    <property type="entry name" value="tRNA modification GTPase MnmE domain 2"/>
    <property type="match status" value="1"/>
</dbReference>
<dbReference type="HAMAP" id="MF_00379">
    <property type="entry name" value="GTPase_MnmE"/>
    <property type="match status" value="1"/>
</dbReference>
<dbReference type="InterPro" id="IPR031168">
    <property type="entry name" value="G_TrmE"/>
</dbReference>
<dbReference type="InterPro" id="IPR006073">
    <property type="entry name" value="GTP-bd"/>
</dbReference>
<dbReference type="InterPro" id="IPR018948">
    <property type="entry name" value="GTP-bd_TrmE_N"/>
</dbReference>
<dbReference type="InterPro" id="IPR004520">
    <property type="entry name" value="GTPase_MnmE"/>
</dbReference>
<dbReference type="InterPro" id="IPR027368">
    <property type="entry name" value="MnmE_dom2"/>
</dbReference>
<dbReference type="InterPro" id="IPR025867">
    <property type="entry name" value="MnmE_helical"/>
</dbReference>
<dbReference type="InterPro" id="IPR027417">
    <property type="entry name" value="P-loop_NTPase"/>
</dbReference>
<dbReference type="InterPro" id="IPR005225">
    <property type="entry name" value="Small_GTP-bd"/>
</dbReference>
<dbReference type="InterPro" id="IPR027266">
    <property type="entry name" value="TrmE/GcvT_dom1"/>
</dbReference>
<dbReference type="NCBIfam" id="TIGR00450">
    <property type="entry name" value="mnmE_trmE_thdF"/>
    <property type="match status" value="1"/>
</dbReference>
<dbReference type="NCBIfam" id="NF003661">
    <property type="entry name" value="PRK05291.1-3"/>
    <property type="match status" value="1"/>
</dbReference>
<dbReference type="NCBIfam" id="TIGR00231">
    <property type="entry name" value="small_GTP"/>
    <property type="match status" value="1"/>
</dbReference>
<dbReference type="PANTHER" id="PTHR42714">
    <property type="entry name" value="TRNA MODIFICATION GTPASE GTPBP3"/>
    <property type="match status" value="1"/>
</dbReference>
<dbReference type="PANTHER" id="PTHR42714:SF2">
    <property type="entry name" value="TRNA MODIFICATION GTPASE GTPBP3, MITOCHONDRIAL"/>
    <property type="match status" value="1"/>
</dbReference>
<dbReference type="Pfam" id="PF01926">
    <property type="entry name" value="MMR_HSR1"/>
    <property type="match status" value="1"/>
</dbReference>
<dbReference type="Pfam" id="PF12631">
    <property type="entry name" value="MnmE_helical"/>
    <property type="match status" value="1"/>
</dbReference>
<dbReference type="Pfam" id="PF10396">
    <property type="entry name" value="TrmE_N"/>
    <property type="match status" value="1"/>
</dbReference>
<dbReference type="PRINTS" id="PR00326">
    <property type="entry name" value="GTP1OBG"/>
</dbReference>
<dbReference type="SUPFAM" id="SSF52540">
    <property type="entry name" value="P-loop containing nucleoside triphosphate hydrolases"/>
    <property type="match status" value="1"/>
</dbReference>
<dbReference type="SUPFAM" id="SSF116878">
    <property type="entry name" value="TrmE connector domain"/>
    <property type="match status" value="1"/>
</dbReference>
<dbReference type="PROSITE" id="PS51709">
    <property type="entry name" value="G_TRME"/>
    <property type="match status" value="1"/>
</dbReference>
<reference key="1">
    <citation type="submission" date="1997-01" db="EMBL/GenBank/DDBJ databases">
        <authorList>
            <person name="Willems H."/>
            <person name="Jaeger C."/>
        </authorList>
    </citation>
    <scope>NUCLEOTIDE SEQUENCE [GENOMIC DNA]</scope>
    <source>
        <strain>Nine Mile phase I</strain>
    </source>
</reference>
<reference key="2">
    <citation type="journal article" date="2003" name="Proc. Natl. Acad. Sci. U.S.A.">
        <title>Complete genome sequence of the Q-fever pathogen, Coxiella burnetii.</title>
        <authorList>
            <person name="Seshadri R."/>
            <person name="Paulsen I.T."/>
            <person name="Eisen J.A."/>
            <person name="Read T.D."/>
            <person name="Nelson K.E."/>
            <person name="Nelson W.C."/>
            <person name="Ward N.L."/>
            <person name="Tettelin H."/>
            <person name="Davidsen T.M."/>
            <person name="Beanan M.J."/>
            <person name="DeBoy R.T."/>
            <person name="Daugherty S.C."/>
            <person name="Brinkac L.M."/>
            <person name="Madupu R."/>
            <person name="Dodson R.J."/>
            <person name="Khouri H.M."/>
            <person name="Lee K.H."/>
            <person name="Carty H.A."/>
            <person name="Scanlan D."/>
            <person name="Heinzen R.A."/>
            <person name="Thompson H.A."/>
            <person name="Samuel J.E."/>
            <person name="Fraser C.M."/>
            <person name="Heidelberg J.F."/>
        </authorList>
    </citation>
    <scope>NUCLEOTIDE SEQUENCE [LARGE SCALE GENOMIC DNA]</scope>
    <source>
        <strain>RSA 493 / Nine Mile phase I</strain>
    </source>
</reference>
<organism>
    <name type="scientific">Coxiella burnetii (strain RSA 493 / Nine Mile phase I)</name>
    <dbReference type="NCBI Taxonomy" id="227377"/>
    <lineage>
        <taxon>Bacteria</taxon>
        <taxon>Pseudomonadati</taxon>
        <taxon>Pseudomonadota</taxon>
        <taxon>Gammaproteobacteria</taxon>
        <taxon>Legionellales</taxon>
        <taxon>Coxiellaceae</taxon>
        <taxon>Coxiella</taxon>
    </lineage>
</organism>
<keyword id="KW-0963">Cytoplasm</keyword>
<keyword id="KW-0342">GTP-binding</keyword>
<keyword id="KW-0378">Hydrolase</keyword>
<keyword id="KW-0460">Magnesium</keyword>
<keyword id="KW-0479">Metal-binding</keyword>
<keyword id="KW-0547">Nucleotide-binding</keyword>
<keyword id="KW-0630">Potassium</keyword>
<keyword id="KW-1185">Reference proteome</keyword>
<keyword id="KW-0819">tRNA processing</keyword>
<gene>
    <name evidence="1" type="primary">mnmE</name>
    <name evidence="1" type="synonym">trmE</name>
    <name type="ordered locus">CBU_1922</name>
</gene>
<name>MNME_COXBU</name>
<comment type="function">
    <text evidence="1">Exhibits a very high intrinsic GTPase hydrolysis rate. Involved in the addition of a carboxymethylaminomethyl (cmnm) group at the wobble position (U34) of certain tRNAs, forming tRNA-cmnm(5)s(2)U34.</text>
</comment>
<comment type="cofactor">
    <cofactor evidence="1">
        <name>K(+)</name>
        <dbReference type="ChEBI" id="CHEBI:29103"/>
    </cofactor>
    <text evidence="1">Binds 1 potassium ion per subunit.</text>
</comment>
<comment type="subunit">
    <text evidence="1">Homodimer. Heterotetramer of two MnmE and two MnmG subunits.</text>
</comment>
<comment type="subcellular location">
    <subcellularLocation>
        <location evidence="1">Cytoplasm</location>
    </subcellularLocation>
</comment>
<comment type="similarity">
    <text evidence="1">Belongs to the TRAFAC class TrmE-Era-EngA-EngB-Septin-like GTPase superfamily. TrmE GTPase family.</text>
</comment>
<comment type="sequence caution" evidence="2">
    <conflict type="erroneous initiation">
        <sequence resource="EMBL-CDS" id="AAO91413"/>
    </conflict>
</comment>
<feature type="chain" id="PRO_0000188872" description="tRNA modification GTPase MnmE">
    <location>
        <begin position="1"/>
        <end position="452"/>
    </location>
</feature>
<feature type="domain" description="TrmE-type G">
    <location>
        <begin position="216"/>
        <end position="375"/>
    </location>
</feature>
<feature type="binding site" evidence="1">
    <location>
        <position position="25"/>
    </location>
    <ligand>
        <name>(6S)-5-formyl-5,6,7,8-tetrahydrofolate</name>
        <dbReference type="ChEBI" id="CHEBI:57457"/>
    </ligand>
</feature>
<feature type="binding site" evidence="1">
    <location>
        <position position="81"/>
    </location>
    <ligand>
        <name>(6S)-5-formyl-5,6,7,8-tetrahydrofolate</name>
        <dbReference type="ChEBI" id="CHEBI:57457"/>
    </ligand>
</feature>
<feature type="binding site" evidence="1">
    <location>
        <position position="120"/>
    </location>
    <ligand>
        <name>(6S)-5-formyl-5,6,7,8-tetrahydrofolate</name>
        <dbReference type="ChEBI" id="CHEBI:57457"/>
    </ligand>
</feature>
<feature type="binding site" evidence="1">
    <location>
        <begin position="226"/>
        <end position="231"/>
    </location>
    <ligand>
        <name>GTP</name>
        <dbReference type="ChEBI" id="CHEBI:37565"/>
    </ligand>
</feature>
<feature type="binding site" evidence="1">
    <location>
        <position position="226"/>
    </location>
    <ligand>
        <name>K(+)</name>
        <dbReference type="ChEBI" id="CHEBI:29103"/>
    </ligand>
</feature>
<feature type="binding site" evidence="1">
    <location>
        <position position="230"/>
    </location>
    <ligand>
        <name>Mg(2+)</name>
        <dbReference type="ChEBI" id="CHEBI:18420"/>
    </ligand>
</feature>
<feature type="binding site" evidence="1">
    <location>
        <begin position="245"/>
        <end position="251"/>
    </location>
    <ligand>
        <name>GTP</name>
        <dbReference type="ChEBI" id="CHEBI:37565"/>
    </ligand>
</feature>
<feature type="binding site" evidence="1">
    <location>
        <position position="245"/>
    </location>
    <ligand>
        <name>K(+)</name>
        <dbReference type="ChEBI" id="CHEBI:29103"/>
    </ligand>
</feature>
<feature type="binding site" evidence="1">
    <location>
        <position position="247"/>
    </location>
    <ligand>
        <name>K(+)</name>
        <dbReference type="ChEBI" id="CHEBI:29103"/>
    </ligand>
</feature>
<feature type="binding site" evidence="1">
    <location>
        <position position="250"/>
    </location>
    <ligand>
        <name>K(+)</name>
        <dbReference type="ChEBI" id="CHEBI:29103"/>
    </ligand>
</feature>
<feature type="binding site" evidence="1">
    <location>
        <position position="251"/>
    </location>
    <ligand>
        <name>Mg(2+)</name>
        <dbReference type="ChEBI" id="CHEBI:18420"/>
    </ligand>
</feature>
<feature type="binding site" evidence="1">
    <location>
        <begin position="270"/>
        <end position="273"/>
    </location>
    <ligand>
        <name>GTP</name>
        <dbReference type="ChEBI" id="CHEBI:37565"/>
    </ligand>
</feature>
<feature type="binding site" evidence="1">
    <location>
        <position position="452"/>
    </location>
    <ligand>
        <name>(6S)-5-formyl-5,6,7,8-tetrahydrofolate</name>
        <dbReference type="ChEBI" id="CHEBI:57457"/>
    </ligand>
</feature>
<proteinExistence type="inferred from homology"/>
<accession>P94612</accession>